<organism>
    <name type="scientific">Prochlorococcus marinus (strain MIT 9515)</name>
    <dbReference type="NCBI Taxonomy" id="167542"/>
    <lineage>
        <taxon>Bacteria</taxon>
        <taxon>Bacillati</taxon>
        <taxon>Cyanobacteriota</taxon>
        <taxon>Cyanophyceae</taxon>
        <taxon>Synechococcales</taxon>
        <taxon>Prochlorococcaceae</taxon>
        <taxon>Prochlorococcus</taxon>
    </lineage>
</organism>
<protein>
    <recommendedName>
        <fullName evidence="1">Small ribosomal subunit protein bS18</fullName>
    </recommendedName>
    <alternativeName>
        <fullName evidence="2">30S ribosomal protein S18</fullName>
    </alternativeName>
</protein>
<sequence length="73" mass="8317">MPNSIFKKQLSPIKPGDPIDYKDVELLKKFITERGKILPRRMTGLTSKQQRDLTLAVKRARIVALLPFVNPEG</sequence>
<name>RS18_PROM5</name>
<keyword id="KW-0687">Ribonucleoprotein</keyword>
<keyword id="KW-0689">Ribosomal protein</keyword>
<keyword id="KW-0694">RNA-binding</keyword>
<keyword id="KW-0699">rRNA-binding</keyword>
<feature type="chain" id="PRO_1000003560" description="Small ribosomal subunit protein bS18">
    <location>
        <begin position="1"/>
        <end position="73"/>
    </location>
</feature>
<reference key="1">
    <citation type="journal article" date="2007" name="PLoS Genet.">
        <title>Patterns and implications of gene gain and loss in the evolution of Prochlorococcus.</title>
        <authorList>
            <person name="Kettler G.C."/>
            <person name="Martiny A.C."/>
            <person name="Huang K."/>
            <person name="Zucker J."/>
            <person name="Coleman M.L."/>
            <person name="Rodrigue S."/>
            <person name="Chen F."/>
            <person name="Lapidus A."/>
            <person name="Ferriera S."/>
            <person name="Johnson J."/>
            <person name="Steglich C."/>
            <person name="Church G.M."/>
            <person name="Richardson P."/>
            <person name="Chisholm S.W."/>
        </authorList>
    </citation>
    <scope>NUCLEOTIDE SEQUENCE [LARGE SCALE GENOMIC DNA]</scope>
    <source>
        <strain>MIT 9515</strain>
    </source>
</reference>
<proteinExistence type="inferred from homology"/>
<accession>A2BWJ6</accession>
<comment type="function">
    <text evidence="1">Binds as a heterodimer with protein bS6 to the central domain of the 16S rRNA, where it helps stabilize the platform of the 30S subunit.</text>
</comment>
<comment type="subunit">
    <text evidence="1">Part of the 30S ribosomal subunit. Forms a tight heterodimer with protein bS6.</text>
</comment>
<comment type="similarity">
    <text evidence="1">Belongs to the bacterial ribosomal protein bS18 family.</text>
</comment>
<gene>
    <name evidence="1" type="primary">rpsR</name>
    <name evidence="1" type="synonym">rps18</name>
    <name type="ordered locus">P9515_09501</name>
</gene>
<dbReference type="EMBL" id="CP000552">
    <property type="protein sequence ID" value="ABM72157.1"/>
    <property type="molecule type" value="Genomic_DNA"/>
</dbReference>
<dbReference type="RefSeq" id="WP_002806014.1">
    <property type="nucleotide sequence ID" value="NC_008817.1"/>
</dbReference>
<dbReference type="SMR" id="A2BWJ6"/>
<dbReference type="STRING" id="167542.P9515_09501"/>
<dbReference type="GeneID" id="60201040"/>
<dbReference type="KEGG" id="pmc:P9515_09501"/>
<dbReference type="eggNOG" id="COG0238">
    <property type="taxonomic scope" value="Bacteria"/>
</dbReference>
<dbReference type="HOGENOM" id="CLU_148710_2_3_3"/>
<dbReference type="OrthoDB" id="9812008at2"/>
<dbReference type="Proteomes" id="UP000001589">
    <property type="component" value="Chromosome"/>
</dbReference>
<dbReference type="GO" id="GO:0022627">
    <property type="term" value="C:cytosolic small ribosomal subunit"/>
    <property type="evidence" value="ECO:0007669"/>
    <property type="project" value="TreeGrafter"/>
</dbReference>
<dbReference type="GO" id="GO:0070181">
    <property type="term" value="F:small ribosomal subunit rRNA binding"/>
    <property type="evidence" value="ECO:0007669"/>
    <property type="project" value="TreeGrafter"/>
</dbReference>
<dbReference type="GO" id="GO:0003735">
    <property type="term" value="F:structural constituent of ribosome"/>
    <property type="evidence" value="ECO:0007669"/>
    <property type="project" value="InterPro"/>
</dbReference>
<dbReference type="GO" id="GO:0006412">
    <property type="term" value="P:translation"/>
    <property type="evidence" value="ECO:0007669"/>
    <property type="project" value="UniProtKB-UniRule"/>
</dbReference>
<dbReference type="FunFam" id="4.10.640.10:FF:000002">
    <property type="entry name" value="30S ribosomal protein S18, chloroplastic"/>
    <property type="match status" value="1"/>
</dbReference>
<dbReference type="Gene3D" id="4.10.640.10">
    <property type="entry name" value="Ribosomal protein S18"/>
    <property type="match status" value="1"/>
</dbReference>
<dbReference type="HAMAP" id="MF_00270">
    <property type="entry name" value="Ribosomal_bS18"/>
    <property type="match status" value="1"/>
</dbReference>
<dbReference type="InterPro" id="IPR001648">
    <property type="entry name" value="Ribosomal_bS18"/>
</dbReference>
<dbReference type="InterPro" id="IPR018275">
    <property type="entry name" value="Ribosomal_bS18_CS"/>
</dbReference>
<dbReference type="InterPro" id="IPR036870">
    <property type="entry name" value="Ribosomal_bS18_sf"/>
</dbReference>
<dbReference type="NCBIfam" id="TIGR00165">
    <property type="entry name" value="S18"/>
    <property type="match status" value="1"/>
</dbReference>
<dbReference type="PANTHER" id="PTHR13479">
    <property type="entry name" value="30S RIBOSOMAL PROTEIN S18"/>
    <property type="match status" value="1"/>
</dbReference>
<dbReference type="PANTHER" id="PTHR13479:SF40">
    <property type="entry name" value="SMALL RIBOSOMAL SUBUNIT PROTEIN BS18M"/>
    <property type="match status" value="1"/>
</dbReference>
<dbReference type="Pfam" id="PF01084">
    <property type="entry name" value="Ribosomal_S18"/>
    <property type="match status" value="1"/>
</dbReference>
<dbReference type="PRINTS" id="PR00974">
    <property type="entry name" value="RIBOSOMALS18"/>
</dbReference>
<dbReference type="SUPFAM" id="SSF46911">
    <property type="entry name" value="Ribosomal protein S18"/>
    <property type="match status" value="1"/>
</dbReference>
<dbReference type="PROSITE" id="PS00057">
    <property type="entry name" value="RIBOSOMAL_S18"/>
    <property type="match status" value="1"/>
</dbReference>
<evidence type="ECO:0000255" key="1">
    <source>
        <dbReference type="HAMAP-Rule" id="MF_00270"/>
    </source>
</evidence>
<evidence type="ECO:0000305" key="2"/>